<organism>
    <name type="scientific">Bacillus cereus (strain B4264)</name>
    <dbReference type="NCBI Taxonomy" id="405532"/>
    <lineage>
        <taxon>Bacteria</taxon>
        <taxon>Bacillati</taxon>
        <taxon>Bacillota</taxon>
        <taxon>Bacilli</taxon>
        <taxon>Bacillales</taxon>
        <taxon>Bacillaceae</taxon>
        <taxon>Bacillus</taxon>
        <taxon>Bacillus cereus group</taxon>
    </lineage>
</organism>
<proteinExistence type="inferred from homology"/>
<name>Y3368_BACC4</name>
<keyword id="KW-1003">Cell membrane</keyword>
<keyword id="KW-0472">Membrane</keyword>
<keyword id="KW-0812">Transmembrane</keyword>
<keyword id="KW-1133">Transmembrane helix</keyword>
<comment type="subcellular location">
    <subcellularLocation>
        <location evidence="1">Cell membrane</location>
        <topology evidence="1">Multi-pass membrane protein</topology>
    </subcellularLocation>
</comment>
<comment type="similarity">
    <text evidence="1">Belongs to the UPF0316 family.</text>
</comment>
<evidence type="ECO:0000255" key="1">
    <source>
        <dbReference type="HAMAP-Rule" id="MF_01515"/>
    </source>
</evidence>
<sequence>MLQALLIFVLQIIYVPILTIRTILLVKNQTRSAAGVGLLEGAIYIVSLGIVFQDLSNWMNIVAYVIGFSAGLLLGGYIENKLAIGYITYQVSLLDRCNELVDELRHSGFGVTVFEGEGINSIRYRLDIVAKRSREKELLEIINEIAPKAFMSSYEIRSFKGGYLTKAMKKRALMKKKDEHAS</sequence>
<feature type="chain" id="PRO_1000198417" description="UPF0316 protein BCB4264_A3368">
    <location>
        <begin position="1"/>
        <end position="182"/>
    </location>
</feature>
<feature type="transmembrane region" description="Helical" evidence="1">
    <location>
        <begin position="6"/>
        <end position="26"/>
    </location>
</feature>
<feature type="transmembrane region" description="Helical" evidence="1">
    <location>
        <begin position="32"/>
        <end position="52"/>
    </location>
</feature>
<feature type="transmembrane region" description="Helical" evidence="1">
    <location>
        <begin position="58"/>
        <end position="78"/>
    </location>
</feature>
<reference key="1">
    <citation type="submission" date="2008-10" db="EMBL/GenBank/DDBJ databases">
        <title>Genome sequence of Bacillus cereus B4264.</title>
        <authorList>
            <person name="Dodson R.J."/>
            <person name="Durkin A.S."/>
            <person name="Rosovitz M.J."/>
            <person name="Rasko D.A."/>
            <person name="Hoffmaster A."/>
            <person name="Ravel J."/>
            <person name="Sutton G."/>
        </authorList>
    </citation>
    <scope>NUCLEOTIDE SEQUENCE [LARGE SCALE GENOMIC DNA]</scope>
    <source>
        <strain>B4264</strain>
    </source>
</reference>
<accession>B7H698</accession>
<protein>
    <recommendedName>
        <fullName evidence="1">UPF0316 protein BCB4264_A3368</fullName>
    </recommendedName>
</protein>
<gene>
    <name type="ordered locus">BCB4264_A3368</name>
</gene>
<dbReference type="EMBL" id="CP001176">
    <property type="protein sequence ID" value="ACK63185.1"/>
    <property type="molecule type" value="Genomic_DNA"/>
</dbReference>
<dbReference type="RefSeq" id="WP_000938438.1">
    <property type="nucleotide sequence ID" value="NZ_VEHB01000007.1"/>
</dbReference>
<dbReference type="SMR" id="B7H698"/>
<dbReference type="KEGG" id="bcb:BCB4264_A3368"/>
<dbReference type="HOGENOM" id="CLU_106166_1_1_9"/>
<dbReference type="Proteomes" id="UP000007096">
    <property type="component" value="Chromosome"/>
</dbReference>
<dbReference type="GO" id="GO:0005886">
    <property type="term" value="C:plasma membrane"/>
    <property type="evidence" value="ECO:0007669"/>
    <property type="project" value="UniProtKB-SubCell"/>
</dbReference>
<dbReference type="CDD" id="cd16381">
    <property type="entry name" value="YitT_C_like_1"/>
    <property type="match status" value="1"/>
</dbReference>
<dbReference type="HAMAP" id="MF_01515">
    <property type="entry name" value="UPF0316"/>
    <property type="match status" value="1"/>
</dbReference>
<dbReference type="InterPro" id="IPR019264">
    <property type="entry name" value="DUF2179"/>
</dbReference>
<dbReference type="InterPro" id="IPR044035">
    <property type="entry name" value="DUF5698"/>
</dbReference>
<dbReference type="InterPro" id="IPR022930">
    <property type="entry name" value="UPF0316"/>
</dbReference>
<dbReference type="NCBIfam" id="NF003193">
    <property type="entry name" value="PRK04164.1-4"/>
    <property type="match status" value="1"/>
</dbReference>
<dbReference type="NCBIfam" id="NF003194">
    <property type="entry name" value="PRK04164.1-5"/>
    <property type="match status" value="1"/>
</dbReference>
<dbReference type="PANTHER" id="PTHR40060">
    <property type="entry name" value="UPF0316 PROTEIN YEBE"/>
    <property type="match status" value="1"/>
</dbReference>
<dbReference type="PANTHER" id="PTHR40060:SF1">
    <property type="entry name" value="UPF0316 PROTEIN YEBE"/>
    <property type="match status" value="1"/>
</dbReference>
<dbReference type="Pfam" id="PF10035">
    <property type="entry name" value="DUF2179"/>
    <property type="match status" value="1"/>
</dbReference>
<dbReference type="Pfam" id="PF18955">
    <property type="entry name" value="DUF5698"/>
    <property type="match status" value="1"/>
</dbReference>